<comment type="function">
    <text evidence="1">Oxytocin causes contraction of the smooth muscle of the uterus and of the mammary gland. Acts by binding to oxytocin receptor (OXTR) (By similarity).</text>
</comment>
<comment type="subunit">
    <text evidence="1">Interacts with oxytocin receptor (Ki=1.5 nM) (By similarity). Interacts with vasopressin V1aR/AVPR1A (Ki=37 nM), V1bR/AVPR1B (Ki=222 nM), and V2R/AVPR2 receptors (Ki=823 nM) (By similarity).</text>
</comment>
<comment type="subcellular location">
    <subcellularLocation>
        <location>Secreted</location>
    </subcellularLocation>
</comment>
<comment type="similarity">
    <text evidence="3">Belongs to the vasopressin/oxytocin family.</text>
</comment>
<reference key="1">
    <citation type="journal article" date="1964" name="Nature">
        <title>Isolation of finback whale oxytocin and vasopressin.</title>
        <authorList>
            <person name="Acher R."/>
            <person name="Chauvet J."/>
            <person name="Chauvet M.-T."/>
        </authorList>
    </citation>
    <scope>PROTEIN SEQUENCE</scope>
    <scope>DISULFIDE BOND</scope>
    <scope>AMIDATION AT GLY-9</scope>
</reference>
<accession>P69056</accession>
<accession>P01188</accession>
<accession>P32878</accession>
<feature type="peptide" id="PRO_0000044082" description="Oxytocin">
    <location>
        <begin position="1"/>
        <end position="9"/>
    </location>
</feature>
<feature type="modified residue" description="Glycine amide" evidence="2">
    <location>
        <position position="9"/>
    </location>
</feature>
<feature type="disulfide bond" evidence="2">
    <location>
        <begin position="1"/>
        <end position="6"/>
    </location>
</feature>
<protein>
    <recommendedName>
        <fullName>Oxytocin</fullName>
    </recommendedName>
    <alternativeName>
        <fullName>Ocytocin</fullName>
    </alternativeName>
</protein>
<dbReference type="PIR" id="A93147">
    <property type="entry name" value="A93147"/>
</dbReference>
<dbReference type="SMR" id="P69056"/>
<dbReference type="GO" id="GO:0005576">
    <property type="term" value="C:extracellular region"/>
    <property type="evidence" value="ECO:0007669"/>
    <property type="project" value="UniProtKB-SubCell"/>
</dbReference>
<dbReference type="GO" id="GO:0005185">
    <property type="term" value="F:neurohypophyseal hormone activity"/>
    <property type="evidence" value="ECO:0007669"/>
    <property type="project" value="InterPro"/>
</dbReference>
<dbReference type="InterPro" id="IPR022423">
    <property type="entry name" value="Neurohypophysial_hormone_CS"/>
</dbReference>
<dbReference type="Pfam" id="PF00220">
    <property type="entry name" value="Hormone_4"/>
    <property type="match status" value="1"/>
</dbReference>
<dbReference type="PROSITE" id="PS00264">
    <property type="entry name" value="NEUROHYPOPHYS_HORM"/>
    <property type="match status" value="1"/>
</dbReference>
<keyword id="KW-0027">Amidation</keyword>
<keyword id="KW-0903">Direct protein sequencing</keyword>
<keyword id="KW-1015">Disulfide bond</keyword>
<keyword id="KW-0372">Hormone</keyword>
<keyword id="KW-0964">Secreted</keyword>
<gene>
    <name type="primary">OXT</name>
</gene>
<proteinExistence type="evidence at protein level"/>
<name>NEU1_BALPH</name>
<sequence length="9" mass="1010">CYIQNCPLG</sequence>
<evidence type="ECO:0000250" key="1">
    <source>
        <dbReference type="UniProtKB" id="P01178"/>
    </source>
</evidence>
<evidence type="ECO:0000269" key="2">
    <source>
    </source>
</evidence>
<evidence type="ECO:0000305" key="3"/>
<organism>
    <name type="scientific">Balaenoptera physalus</name>
    <name type="common">Fin whale</name>
    <name type="synonym">Balaena physalus</name>
    <dbReference type="NCBI Taxonomy" id="9770"/>
    <lineage>
        <taxon>Eukaryota</taxon>
        <taxon>Metazoa</taxon>
        <taxon>Chordata</taxon>
        <taxon>Craniata</taxon>
        <taxon>Vertebrata</taxon>
        <taxon>Euteleostomi</taxon>
        <taxon>Mammalia</taxon>
        <taxon>Eutheria</taxon>
        <taxon>Laurasiatheria</taxon>
        <taxon>Artiodactyla</taxon>
        <taxon>Whippomorpha</taxon>
        <taxon>Cetacea</taxon>
        <taxon>Mysticeti</taxon>
        <taxon>Balaenopteridae</taxon>
        <taxon>Balaenoptera</taxon>
    </lineage>
</organism>